<name>NUON_CAMLR</name>
<evidence type="ECO:0000255" key="1">
    <source>
        <dbReference type="HAMAP-Rule" id="MF_00445"/>
    </source>
</evidence>
<feature type="chain" id="PRO_0000391122" description="NADH-quinone oxidoreductase subunit N">
    <location>
        <begin position="1"/>
        <end position="465"/>
    </location>
</feature>
<feature type="transmembrane region" description="Helical" evidence="1">
    <location>
        <begin position="9"/>
        <end position="29"/>
    </location>
</feature>
<feature type="transmembrane region" description="Helical" evidence="1">
    <location>
        <begin position="44"/>
        <end position="64"/>
    </location>
</feature>
<feature type="transmembrane region" description="Helical" evidence="1">
    <location>
        <begin position="73"/>
        <end position="93"/>
    </location>
</feature>
<feature type="transmembrane region" description="Helical" evidence="1">
    <location>
        <begin position="110"/>
        <end position="130"/>
    </location>
</feature>
<feature type="transmembrane region" description="Helical" evidence="1">
    <location>
        <begin position="159"/>
        <end position="179"/>
    </location>
</feature>
<feature type="transmembrane region" description="Helical" evidence="1">
    <location>
        <begin position="198"/>
        <end position="218"/>
    </location>
</feature>
<feature type="transmembrane region" description="Helical" evidence="1">
    <location>
        <begin position="235"/>
        <end position="255"/>
    </location>
</feature>
<feature type="transmembrane region" description="Helical" evidence="1">
    <location>
        <begin position="265"/>
        <end position="285"/>
    </location>
</feature>
<feature type="transmembrane region" description="Helical" evidence="1">
    <location>
        <begin position="292"/>
        <end position="312"/>
    </location>
</feature>
<feature type="transmembrane region" description="Helical" evidence="1">
    <location>
        <begin position="327"/>
        <end position="347"/>
    </location>
</feature>
<feature type="transmembrane region" description="Helical" evidence="1">
    <location>
        <begin position="371"/>
        <end position="391"/>
    </location>
</feature>
<feature type="transmembrane region" description="Helical" evidence="1">
    <location>
        <begin position="405"/>
        <end position="427"/>
    </location>
</feature>
<feature type="transmembrane region" description="Helical" evidence="1">
    <location>
        <begin position="444"/>
        <end position="464"/>
    </location>
</feature>
<accession>B9KDV9</accession>
<protein>
    <recommendedName>
        <fullName evidence="1">NADH-quinone oxidoreductase subunit N</fullName>
        <ecNumber evidence="1">7.1.1.-</ecNumber>
    </recommendedName>
    <alternativeName>
        <fullName evidence="1">NADH dehydrogenase I subunit N</fullName>
    </alternativeName>
    <alternativeName>
        <fullName evidence="1">NDH-1 subunit N</fullName>
    </alternativeName>
</protein>
<gene>
    <name evidence="1" type="primary">nuoN</name>
    <name type="ordered locus">Cla_1432</name>
</gene>
<reference key="1">
    <citation type="journal article" date="2008" name="Foodborne Pathog. Dis.">
        <title>The complete genome sequence and analysis of the human pathogen Campylobacter lari.</title>
        <authorList>
            <person name="Miller W.G."/>
            <person name="Wang G."/>
            <person name="Binnewies T.T."/>
            <person name="Parker C.T."/>
        </authorList>
    </citation>
    <scope>NUCLEOTIDE SEQUENCE [LARGE SCALE GENOMIC DNA]</scope>
    <source>
        <strain>RM2100 / D67 / ATCC BAA-1060</strain>
    </source>
</reference>
<organism>
    <name type="scientific">Campylobacter lari (strain RM2100 / D67 / ATCC BAA-1060)</name>
    <dbReference type="NCBI Taxonomy" id="306263"/>
    <lineage>
        <taxon>Bacteria</taxon>
        <taxon>Pseudomonadati</taxon>
        <taxon>Campylobacterota</taxon>
        <taxon>Epsilonproteobacteria</taxon>
        <taxon>Campylobacterales</taxon>
        <taxon>Campylobacteraceae</taxon>
        <taxon>Campylobacter</taxon>
    </lineage>
</organism>
<keyword id="KW-0997">Cell inner membrane</keyword>
<keyword id="KW-1003">Cell membrane</keyword>
<keyword id="KW-0472">Membrane</keyword>
<keyword id="KW-0520">NAD</keyword>
<keyword id="KW-0874">Quinone</keyword>
<keyword id="KW-1185">Reference proteome</keyword>
<keyword id="KW-1278">Translocase</keyword>
<keyword id="KW-0812">Transmembrane</keyword>
<keyword id="KW-1133">Transmembrane helix</keyword>
<keyword id="KW-0813">Transport</keyword>
<keyword id="KW-0830">Ubiquinone</keyword>
<comment type="function">
    <text evidence="1">NDH-1 shuttles electrons from NADH, via FMN and iron-sulfur (Fe-S) centers, to quinones in the respiratory chain. The immediate electron acceptor for the enzyme in this species is believed to be ubiquinone. Couples the redox reaction to proton translocation (for every two electrons transferred, four hydrogen ions are translocated across the cytoplasmic membrane), and thus conserves the redox energy in a proton gradient.</text>
</comment>
<comment type="catalytic activity">
    <reaction evidence="1">
        <text>a quinone + NADH + 5 H(+)(in) = a quinol + NAD(+) + 4 H(+)(out)</text>
        <dbReference type="Rhea" id="RHEA:57888"/>
        <dbReference type="ChEBI" id="CHEBI:15378"/>
        <dbReference type="ChEBI" id="CHEBI:24646"/>
        <dbReference type="ChEBI" id="CHEBI:57540"/>
        <dbReference type="ChEBI" id="CHEBI:57945"/>
        <dbReference type="ChEBI" id="CHEBI:132124"/>
    </reaction>
</comment>
<comment type="subunit">
    <text evidence="1">NDH-1 is composed of 14 different subunits. Subunits NuoA, H, J, K, L, M, N constitute the membrane sector of the complex.</text>
</comment>
<comment type="subcellular location">
    <subcellularLocation>
        <location evidence="1">Cell inner membrane</location>
        <topology evidence="1">Multi-pass membrane protein</topology>
    </subcellularLocation>
</comment>
<comment type="similarity">
    <text evidence="1">Belongs to the complex I subunit 2 family.</text>
</comment>
<sequence length="465" mass="51697">MSGFSLEKFNFVLLFPVLSLLFWAIVLLLLDAFKKLSRNFYIGASIIALFSTLCFLLIYNGFVLDNSHAFFDLFVSDNYAIFAQIVILVFSMLYLLMDKDEQKAEFFSLFLFMIASLILMISSTNLIVIFLALEGSSLALYTLIALRGTHNAISSSIKYFTLAAVGAGFFVFACAFVYLKTKSLDLDNLLHSEYISDPILLCAGVMFLVIVGVKLSIAPFHFWLKDVYYGVHTNFIAFISIVPKIAMIIVVLRIFSALGGGVKFEYIVALLAIFSMLAVSIVALIQKDVKKMLAYSSITHSSFILAVIVSSMSVSSQGDGTSYLLSIFALFVYWISFAFANYGIFLILSLFQKSSFESFSGLFDQRPVLSIMLAIFILCIAGIPPFGIFWGKILILASILNSGYYALVFAVALSSMIMLYAYLKILIYVFFKKAQIVESANLDVKQKIILCLCLIGSVSCVFLLL</sequence>
<proteinExistence type="inferred from homology"/>
<dbReference type="EC" id="7.1.1.-" evidence="1"/>
<dbReference type="EMBL" id="CP000932">
    <property type="protein sequence ID" value="ACM64747.1"/>
    <property type="molecule type" value="Genomic_DNA"/>
</dbReference>
<dbReference type="RefSeq" id="WP_012662130.1">
    <property type="nucleotide sequence ID" value="NC_012039.1"/>
</dbReference>
<dbReference type="RefSeq" id="WP_012662131.1">
    <property type="nucleotide sequence ID" value="NC_012039.1"/>
</dbReference>
<dbReference type="SMR" id="B9KDV9"/>
<dbReference type="STRING" id="306263.Cla_1432"/>
<dbReference type="KEGG" id="cla:CLA_1432"/>
<dbReference type="PATRIC" id="fig|306263.5.peg.1418"/>
<dbReference type="eggNOG" id="COG1007">
    <property type="taxonomic scope" value="Bacteria"/>
</dbReference>
<dbReference type="HOGENOM" id="CLU_007100_1_4_7"/>
<dbReference type="Proteomes" id="UP000007727">
    <property type="component" value="Chromosome"/>
</dbReference>
<dbReference type="GO" id="GO:0005886">
    <property type="term" value="C:plasma membrane"/>
    <property type="evidence" value="ECO:0007669"/>
    <property type="project" value="UniProtKB-SubCell"/>
</dbReference>
<dbReference type="GO" id="GO:0008137">
    <property type="term" value="F:NADH dehydrogenase (ubiquinone) activity"/>
    <property type="evidence" value="ECO:0007669"/>
    <property type="project" value="InterPro"/>
</dbReference>
<dbReference type="GO" id="GO:0050136">
    <property type="term" value="F:NADH:ubiquinone reductase (non-electrogenic) activity"/>
    <property type="evidence" value="ECO:0007669"/>
    <property type="project" value="UniProtKB-UniRule"/>
</dbReference>
<dbReference type="GO" id="GO:0048038">
    <property type="term" value="F:quinone binding"/>
    <property type="evidence" value="ECO:0007669"/>
    <property type="project" value="UniProtKB-KW"/>
</dbReference>
<dbReference type="GO" id="GO:0042773">
    <property type="term" value="P:ATP synthesis coupled electron transport"/>
    <property type="evidence" value="ECO:0007669"/>
    <property type="project" value="InterPro"/>
</dbReference>
<dbReference type="HAMAP" id="MF_00445">
    <property type="entry name" value="NDH1_NuoN_1"/>
    <property type="match status" value="1"/>
</dbReference>
<dbReference type="InterPro" id="IPR010096">
    <property type="entry name" value="NADH-Q_OxRdtase_suN/2"/>
</dbReference>
<dbReference type="InterPro" id="IPR001750">
    <property type="entry name" value="ND/Mrp_TM"/>
</dbReference>
<dbReference type="PANTHER" id="PTHR22773">
    <property type="entry name" value="NADH DEHYDROGENASE"/>
    <property type="match status" value="1"/>
</dbReference>
<dbReference type="Pfam" id="PF00361">
    <property type="entry name" value="Proton_antipo_M"/>
    <property type="match status" value="1"/>
</dbReference>